<sequence>MDIQKQIEIIRRGTVDLISEEELKSKLQKKKTLKIKAGFDPTAPDLHLGHFVQLKKLKHFQDLGHEVSFLLGDFTAMIGDPTGKSETRKRLSREEVLENSKTYQNQVFKVLDPVKTKIVYNSNWCSKMNFEDVLVLSSKYNVARMLERDDFSKRYKAGQPISMIEFLYPLVQGYDSVAMECDVELGGTDQKFNLLVGRDLQREYGKEAQCVLTLPLLVGLDGSKKMSKSLGNYVGITETPIDMFGKLMSISDDLMWNYFELLTDLPLPEIENRKNGMAKKELHPKEIKTELAKLIMDQFSSPSENEEAIQEWKKIHNPKSRAVPDDVKEIKLGEEFFAETPEPLLVWVLSKLSFIPSVSEGRRLIKAGGLYLSEDKITDEKFPIQKGKEYLVRQGKKGKFLKIIS</sequence>
<dbReference type="EC" id="6.1.1.1" evidence="1"/>
<dbReference type="EMBL" id="AE010300">
    <property type="protein sequence ID" value="AAN49436.1"/>
    <property type="molecule type" value="Genomic_DNA"/>
</dbReference>
<dbReference type="RefSeq" id="NP_712418.1">
    <property type="nucleotide sequence ID" value="NC_004342.2"/>
</dbReference>
<dbReference type="RefSeq" id="WP_000354445.1">
    <property type="nucleotide sequence ID" value="NC_004342.2"/>
</dbReference>
<dbReference type="SMR" id="Q8F411"/>
<dbReference type="FunCoup" id="Q8F411">
    <property type="interactions" value="506"/>
</dbReference>
<dbReference type="STRING" id="189518.LA_2237"/>
<dbReference type="PaxDb" id="189518-LA_2237"/>
<dbReference type="EnsemblBacteria" id="AAN49436">
    <property type="protein sequence ID" value="AAN49436"/>
    <property type="gene ID" value="LA_2237"/>
</dbReference>
<dbReference type="GeneID" id="61141596"/>
<dbReference type="KEGG" id="lil:LA_2237"/>
<dbReference type="PATRIC" id="fig|189518.3.peg.2225"/>
<dbReference type="HOGENOM" id="CLU_024003_5_0_12"/>
<dbReference type="InParanoid" id="Q8F411"/>
<dbReference type="OrthoDB" id="9804243at2"/>
<dbReference type="Proteomes" id="UP000001408">
    <property type="component" value="Chromosome I"/>
</dbReference>
<dbReference type="GO" id="GO:0005829">
    <property type="term" value="C:cytosol"/>
    <property type="evidence" value="ECO:0000318"/>
    <property type="project" value="GO_Central"/>
</dbReference>
<dbReference type="GO" id="GO:0005524">
    <property type="term" value="F:ATP binding"/>
    <property type="evidence" value="ECO:0007669"/>
    <property type="project" value="UniProtKB-UniRule"/>
</dbReference>
<dbReference type="GO" id="GO:0003723">
    <property type="term" value="F:RNA binding"/>
    <property type="evidence" value="ECO:0007669"/>
    <property type="project" value="UniProtKB-KW"/>
</dbReference>
<dbReference type="GO" id="GO:0004831">
    <property type="term" value="F:tyrosine-tRNA ligase activity"/>
    <property type="evidence" value="ECO:0000318"/>
    <property type="project" value="GO_Central"/>
</dbReference>
<dbReference type="GO" id="GO:0043039">
    <property type="term" value="P:tRNA aminoacylation"/>
    <property type="evidence" value="ECO:0000318"/>
    <property type="project" value="GO_Central"/>
</dbReference>
<dbReference type="GO" id="GO:0006437">
    <property type="term" value="P:tyrosyl-tRNA aminoacylation"/>
    <property type="evidence" value="ECO:0007669"/>
    <property type="project" value="UniProtKB-UniRule"/>
</dbReference>
<dbReference type="CDD" id="cd00805">
    <property type="entry name" value="TyrRS_core"/>
    <property type="match status" value="1"/>
</dbReference>
<dbReference type="FunFam" id="1.10.240.10:FF:000006">
    <property type="entry name" value="Tyrosine--tRNA ligase"/>
    <property type="match status" value="1"/>
</dbReference>
<dbReference type="FunFam" id="3.10.290.10:FF:000032">
    <property type="entry name" value="Tyrosine--tRNA ligase"/>
    <property type="match status" value="1"/>
</dbReference>
<dbReference type="FunFam" id="3.40.50.620:FF:000061">
    <property type="entry name" value="Tyrosine--tRNA ligase"/>
    <property type="match status" value="1"/>
</dbReference>
<dbReference type="Gene3D" id="3.40.50.620">
    <property type="entry name" value="HUPs"/>
    <property type="match status" value="1"/>
</dbReference>
<dbReference type="Gene3D" id="3.10.290.10">
    <property type="entry name" value="RNA-binding S4 domain"/>
    <property type="match status" value="1"/>
</dbReference>
<dbReference type="Gene3D" id="1.10.240.10">
    <property type="entry name" value="Tyrosyl-Transfer RNA Synthetase"/>
    <property type="match status" value="1"/>
</dbReference>
<dbReference type="HAMAP" id="MF_02007">
    <property type="entry name" value="Tyr_tRNA_synth_type2"/>
    <property type="match status" value="1"/>
</dbReference>
<dbReference type="InterPro" id="IPR001412">
    <property type="entry name" value="aa-tRNA-synth_I_CS"/>
</dbReference>
<dbReference type="InterPro" id="IPR002305">
    <property type="entry name" value="aa-tRNA-synth_Ic"/>
</dbReference>
<dbReference type="InterPro" id="IPR014729">
    <property type="entry name" value="Rossmann-like_a/b/a_fold"/>
</dbReference>
<dbReference type="InterPro" id="IPR036986">
    <property type="entry name" value="S4_RNA-bd_sf"/>
</dbReference>
<dbReference type="InterPro" id="IPR002307">
    <property type="entry name" value="Tyr-tRNA-ligase"/>
</dbReference>
<dbReference type="InterPro" id="IPR024088">
    <property type="entry name" value="Tyr-tRNA-ligase_bac-type"/>
</dbReference>
<dbReference type="InterPro" id="IPR024108">
    <property type="entry name" value="Tyr-tRNA-ligase_bac_2"/>
</dbReference>
<dbReference type="NCBIfam" id="TIGR00234">
    <property type="entry name" value="tyrS"/>
    <property type="match status" value="1"/>
</dbReference>
<dbReference type="PANTHER" id="PTHR11766:SF1">
    <property type="entry name" value="TYROSINE--TRNA LIGASE"/>
    <property type="match status" value="1"/>
</dbReference>
<dbReference type="PANTHER" id="PTHR11766">
    <property type="entry name" value="TYROSYL-TRNA SYNTHETASE"/>
    <property type="match status" value="1"/>
</dbReference>
<dbReference type="Pfam" id="PF00579">
    <property type="entry name" value="tRNA-synt_1b"/>
    <property type="match status" value="1"/>
</dbReference>
<dbReference type="PRINTS" id="PR01040">
    <property type="entry name" value="TRNASYNTHTYR"/>
</dbReference>
<dbReference type="SUPFAM" id="SSF55174">
    <property type="entry name" value="Alpha-L RNA-binding motif"/>
    <property type="match status" value="1"/>
</dbReference>
<dbReference type="SUPFAM" id="SSF52374">
    <property type="entry name" value="Nucleotidylyl transferase"/>
    <property type="match status" value="1"/>
</dbReference>
<dbReference type="PROSITE" id="PS00178">
    <property type="entry name" value="AA_TRNA_LIGASE_I"/>
    <property type="match status" value="1"/>
</dbReference>
<dbReference type="PROSITE" id="PS50889">
    <property type="entry name" value="S4"/>
    <property type="match status" value="1"/>
</dbReference>
<comment type="function">
    <text evidence="1">Catalyzes the attachment of tyrosine to tRNA(Tyr) in a two-step reaction: tyrosine is first activated by ATP to form Tyr-AMP and then transferred to the acceptor end of tRNA(Tyr).</text>
</comment>
<comment type="catalytic activity">
    <reaction evidence="1">
        <text>tRNA(Tyr) + L-tyrosine + ATP = L-tyrosyl-tRNA(Tyr) + AMP + diphosphate + H(+)</text>
        <dbReference type="Rhea" id="RHEA:10220"/>
        <dbReference type="Rhea" id="RHEA-COMP:9706"/>
        <dbReference type="Rhea" id="RHEA-COMP:9707"/>
        <dbReference type="ChEBI" id="CHEBI:15378"/>
        <dbReference type="ChEBI" id="CHEBI:30616"/>
        <dbReference type="ChEBI" id="CHEBI:33019"/>
        <dbReference type="ChEBI" id="CHEBI:58315"/>
        <dbReference type="ChEBI" id="CHEBI:78442"/>
        <dbReference type="ChEBI" id="CHEBI:78536"/>
        <dbReference type="ChEBI" id="CHEBI:456215"/>
        <dbReference type="EC" id="6.1.1.1"/>
    </reaction>
</comment>
<comment type="subunit">
    <text evidence="1">Homodimer.</text>
</comment>
<comment type="subcellular location">
    <subcellularLocation>
        <location evidence="1">Cytoplasm</location>
    </subcellularLocation>
</comment>
<comment type="similarity">
    <text evidence="1">Belongs to the class-I aminoacyl-tRNA synthetase family. TyrS type 2 subfamily.</text>
</comment>
<gene>
    <name evidence="1" type="primary">tyrS</name>
    <name type="ordered locus">LA_2237</name>
</gene>
<accession>Q8F411</accession>
<keyword id="KW-0030">Aminoacyl-tRNA synthetase</keyword>
<keyword id="KW-0067">ATP-binding</keyword>
<keyword id="KW-0963">Cytoplasm</keyword>
<keyword id="KW-0436">Ligase</keyword>
<keyword id="KW-0547">Nucleotide-binding</keyword>
<keyword id="KW-0648">Protein biosynthesis</keyword>
<keyword id="KW-1185">Reference proteome</keyword>
<keyword id="KW-0694">RNA-binding</keyword>
<name>SYY_LEPIN</name>
<feature type="chain" id="PRO_0000236731" description="Tyrosine--tRNA ligase">
    <location>
        <begin position="1"/>
        <end position="405"/>
    </location>
</feature>
<feature type="domain" description="S4 RNA-binding" evidence="1">
    <location>
        <begin position="342"/>
        <end position="404"/>
    </location>
</feature>
<feature type="short sequence motif" description="'HIGH' region">
    <location>
        <begin position="41"/>
        <end position="50"/>
    </location>
</feature>
<feature type="short sequence motif" description="'KMSKS' region">
    <location>
        <begin position="225"/>
        <end position="229"/>
    </location>
</feature>
<feature type="binding site" evidence="1">
    <location>
        <position position="228"/>
    </location>
    <ligand>
        <name>ATP</name>
        <dbReference type="ChEBI" id="CHEBI:30616"/>
    </ligand>
</feature>
<proteinExistence type="inferred from homology"/>
<organism>
    <name type="scientific">Leptospira interrogans serogroup Icterohaemorrhagiae serovar Lai (strain 56601)</name>
    <dbReference type="NCBI Taxonomy" id="189518"/>
    <lineage>
        <taxon>Bacteria</taxon>
        <taxon>Pseudomonadati</taxon>
        <taxon>Spirochaetota</taxon>
        <taxon>Spirochaetia</taxon>
        <taxon>Leptospirales</taxon>
        <taxon>Leptospiraceae</taxon>
        <taxon>Leptospira</taxon>
    </lineage>
</organism>
<reference key="1">
    <citation type="journal article" date="2003" name="Nature">
        <title>Unique physiological and pathogenic features of Leptospira interrogans revealed by whole-genome sequencing.</title>
        <authorList>
            <person name="Ren S.-X."/>
            <person name="Fu G."/>
            <person name="Jiang X.-G."/>
            <person name="Zeng R."/>
            <person name="Miao Y.-G."/>
            <person name="Xu H."/>
            <person name="Zhang Y.-X."/>
            <person name="Xiong H."/>
            <person name="Lu G."/>
            <person name="Lu L.-F."/>
            <person name="Jiang H.-Q."/>
            <person name="Jia J."/>
            <person name="Tu Y.-F."/>
            <person name="Jiang J.-X."/>
            <person name="Gu W.-Y."/>
            <person name="Zhang Y.-Q."/>
            <person name="Cai Z."/>
            <person name="Sheng H.-H."/>
            <person name="Yin H.-F."/>
            <person name="Zhang Y."/>
            <person name="Zhu G.-F."/>
            <person name="Wan M."/>
            <person name="Huang H.-L."/>
            <person name="Qian Z."/>
            <person name="Wang S.-Y."/>
            <person name="Ma W."/>
            <person name="Yao Z.-J."/>
            <person name="Shen Y."/>
            <person name="Qiang B.-Q."/>
            <person name="Xia Q.-C."/>
            <person name="Guo X.-K."/>
            <person name="Danchin A."/>
            <person name="Saint Girons I."/>
            <person name="Somerville R.L."/>
            <person name="Wen Y.-M."/>
            <person name="Shi M.-H."/>
            <person name="Chen Z."/>
            <person name="Xu J.-G."/>
            <person name="Zhao G.-P."/>
        </authorList>
    </citation>
    <scope>NUCLEOTIDE SEQUENCE [LARGE SCALE GENOMIC DNA]</scope>
    <source>
        <strain>56601</strain>
    </source>
</reference>
<evidence type="ECO:0000255" key="1">
    <source>
        <dbReference type="HAMAP-Rule" id="MF_02007"/>
    </source>
</evidence>
<protein>
    <recommendedName>
        <fullName evidence="1">Tyrosine--tRNA ligase</fullName>
        <ecNumber evidence="1">6.1.1.1</ecNumber>
    </recommendedName>
    <alternativeName>
        <fullName evidence="1">Tyrosyl-tRNA synthetase</fullName>
        <shortName evidence="1">TyrRS</shortName>
    </alternativeName>
</protein>